<evidence type="ECO:0000255" key="1">
    <source>
        <dbReference type="HAMAP-Rule" id="MF_00185"/>
    </source>
</evidence>
<protein>
    <recommendedName>
        <fullName evidence="1">tRNA dimethylallyltransferase</fullName>
        <ecNumber evidence="1">2.5.1.75</ecNumber>
    </recommendedName>
    <alternativeName>
        <fullName evidence="1">Dimethylallyl diphosphate:tRNA dimethylallyltransferase</fullName>
        <shortName evidence="1">DMAPP:tRNA dimethylallyltransferase</shortName>
        <shortName evidence="1">DMATase</shortName>
    </alternativeName>
    <alternativeName>
        <fullName evidence="1">Isopentenyl-diphosphate:tRNA isopentenyltransferase</fullName>
        <shortName evidence="1">IPP transferase</shortName>
        <shortName evidence="1">IPPT</shortName>
        <shortName evidence="1">IPTase</shortName>
    </alternativeName>
</protein>
<organism>
    <name type="scientific">Pelodictyon phaeoclathratiforme (strain DSM 5477 / BU-1)</name>
    <dbReference type="NCBI Taxonomy" id="324925"/>
    <lineage>
        <taxon>Bacteria</taxon>
        <taxon>Pseudomonadati</taxon>
        <taxon>Chlorobiota</taxon>
        <taxon>Chlorobiia</taxon>
        <taxon>Chlorobiales</taxon>
        <taxon>Chlorobiaceae</taxon>
        <taxon>Chlorobium/Pelodictyon group</taxon>
        <taxon>Pelodictyon</taxon>
    </lineage>
</organism>
<reference key="1">
    <citation type="submission" date="2008-06" db="EMBL/GenBank/DDBJ databases">
        <title>Complete sequence of Pelodictyon phaeoclathratiforme BU-1.</title>
        <authorList>
            <consortium name="US DOE Joint Genome Institute"/>
            <person name="Lucas S."/>
            <person name="Copeland A."/>
            <person name="Lapidus A."/>
            <person name="Glavina del Rio T."/>
            <person name="Dalin E."/>
            <person name="Tice H."/>
            <person name="Bruce D."/>
            <person name="Goodwin L."/>
            <person name="Pitluck S."/>
            <person name="Schmutz J."/>
            <person name="Larimer F."/>
            <person name="Land M."/>
            <person name="Hauser L."/>
            <person name="Kyrpides N."/>
            <person name="Mikhailova N."/>
            <person name="Liu Z."/>
            <person name="Li T."/>
            <person name="Zhao F."/>
            <person name="Overmann J."/>
            <person name="Bryant D.A."/>
            <person name="Richardson P."/>
        </authorList>
    </citation>
    <scope>NUCLEOTIDE SEQUENCE [LARGE SCALE GENOMIC DNA]</scope>
    <source>
        <strain>DSM 5477 / BU-1</strain>
    </source>
</reference>
<sequence>MATAEKKQPSVIVILGPTASGKSALALAVAKKIGGEIISADSRQIYREFDIGAAKPSESALGEIRHHFVNEKNIGEPFTAGDFATEAAERIITLHRRGKRAVVAGGSTLYLEGLIEGFADLPPANPEIRARLLGELEEEGNEKLYAKLFERDPDQAATLDPTKSQRLIRSLEIIEITGLSVTELQARAKKRQHGDLCFVTTGLAMERATLYQRINHRTDNMIDAGLYDEAKGLYHKYHKLIASGKVSSLQSVGYQEFFQYLDGMISFDDAVRLIKQHTRNYAKRQLTFFHNRLSVNWTDAPLNSKELDSLAERLSKGP</sequence>
<accession>B4SGR0</accession>
<keyword id="KW-0067">ATP-binding</keyword>
<keyword id="KW-0460">Magnesium</keyword>
<keyword id="KW-0547">Nucleotide-binding</keyword>
<keyword id="KW-1185">Reference proteome</keyword>
<keyword id="KW-0808">Transferase</keyword>
<keyword id="KW-0819">tRNA processing</keyword>
<dbReference type="EC" id="2.5.1.75" evidence="1"/>
<dbReference type="EMBL" id="CP001110">
    <property type="protein sequence ID" value="ACF43473.1"/>
    <property type="molecule type" value="Genomic_DNA"/>
</dbReference>
<dbReference type="RefSeq" id="WP_012507965.1">
    <property type="nucleotide sequence ID" value="NC_011060.1"/>
</dbReference>
<dbReference type="SMR" id="B4SGR0"/>
<dbReference type="STRING" id="324925.Ppha_1201"/>
<dbReference type="KEGG" id="pph:Ppha_1201"/>
<dbReference type="eggNOG" id="COG0324">
    <property type="taxonomic scope" value="Bacteria"/>
</dbReference>
<dbReference type="HOGENOM" id="CLU_032616_0_1_10"/>
<dbReference type="OrthoDB" id="9776390at2"/>
<dbReference type="Proteomes" id="UP000002724">
    <property type="component" value="Chromosome"/>
</dbReference>
<dbReference type="GO" id="GO:0005524">
    <property type="term" value="F:ATP binding"/>
    <property type="evidence" value="ECO:0007669"/>
    <property type="project" value="UniProtKB-UniRule"/>
</dbReference>
<dbReference type="GO" id="GO:0052381">
    <property type="term" value="F:tRNA dimethylallyltransferase activity"/>
    <property type="evidence" value="ECO:0007669"/>
    <property type="project" value="UniProtKB-UniRule"/>
</dbReference>
<dbReference type="GO" id="GO:0006400">
    <property type="term" value="P:tRNA modification"/>
    <property type="evidence" value="ECO:0007669"/>
    <property type="project" value="TreeGrafter"/>
</dbReference>
<dbReference type="Gene3D" id="1.10.20.140">
    <property type="match status" value="1"/>
</dbReference>
<dbReference type="Gene3D" id="3.40.50.300">
    <property type="entry name" value="P-loop containing nucleotide triphosphate hydrolases"/>
    <property type="match status" value="1"/>
</dbReference>
<dbReference type="HAMAP" id="MF_00185">
    <property type="entry name" value="IPP_trans"/>
    <property type="match status" value="1"/>
</dbReference>
<dbReference type="InterPro" id="IPR039657">
    <property type="entry name" value="Dimethylallyltransferase"/>
</dbReference>
<dbReference type="InterPro" id="IPR018022">
    <property type="entry name" value="IPT"/>
</dbReference>
<dbReference type="InterPro" id="IPR027417">
    <property type="entry name" value="P-loop_NTPase"/>
</dbReference>
<dbReference type="NCBIfam" id="TIGR00174">
    <property type="entry name" value="miaA"/>
    <property type="match status" value="1"/>
</dbReference>
<dbReference type="PANTHER" id="PTHR11088">
    <property type="entry name" value="TRNA DIMETHYLALLYLTRANSFERASE"/>
    <property type="match status" value="1"/>
</dbReference>
<dbReference type="PANTHER" id="PTHR11088:SF60">
    <property type="entry name" value="TRNA DIMETHYLALLYLTRANSFERASE"/>
    <property type="match status" value="1"/>
</dbReference>
<dbReference type="Pfam" id="PF01715">
    <property type="entry name" value="IPPT"/>
    <property type="match status" value="1"/>
</dbReference>
<dbReference type="SUPFAM" id="SSF52540">
    <property type="entry name" value="P-loop containing nucleoside triphosphate hydrolases"/>
    <property type="match status" value="2"/>
</dbReference>
<proteinExistence type="inferred from homology"/>
<comment type="function">
    <text evidence="1">Catalyzes the transfer of a dimethylallyl group onto the adenine at position 37 in tRNAs that read codons beginning with uridine, leading to the formation of N6-(dimethylallyl)adenosine (i(6)A).</text>
</comment>
<comment type="catalytic activity">
    <reaction evidence="1">
        <text>adenosine(37) in tRNA + dimethylallyl diphosphate = N(6)-dimethylallyladenosine(37) in tRNA + diphosphate</text>
        <dbReference type="Rhea" id="RHEA:26482"/>
        <dbReference type="Rhea" id="RHEA-COMP:10162"/>
        <dbReference type="Rhea" id="RHEA-COMP:10375"/>
        <dbReference type="ChEBI" id="CHEBI:33019"/>
        <dbReference type="ChEBI" id="CHEBI:57623"/>
        <dbReference type="ChEBI" id="CHEBI:74411"/>
        <dbReference type="ChEBI" id="CHEBI:74415"/>
        <dbReference type="EC" id="2.5.1.75"/>
    </reaction>
</comment>
<comment type="cofactor">
    <cofactor evidence="1">
        <name>Mg(2+)</name>
        <dbReference type="ChEBI" id="CHEBI:18420"/>
    </cofactor>
</comment>
<comment type="subunit">
    <text evidence="1">Monomer.</text>
</comment>
<comment type="similarity">
    <text evidence="1">Belongs to the IPP transferase family.</text>
</comment>
<feature type="chain" id="PRO_1000098675" description="tRNA dimethylallyltransferase">
    <location>
        <begin position="1"/>
        <end position="318"/>
    </location>
</feature>
<feature type="region of interest" description="Interaction with substrate tRNA" evidence="1">
    <location>
        <begin position="41"/>
        <end position="44"/>
    </location>
</feature>
<feature type="region of interest" description="Interaction with substrate tRNA" evidence="1">
    <location>
        <begin position="165"/>
        <end position="169"/>
    </location>
</feature>
<feature type="binding site" evidence="1">
    <location>
        <begin position="16"/>
        <end position="23"/>
    </location>
    <ligand>
        <name>ATP</name>
        <dbReference type="ChEBI" id="CHEBI:30616"/>
    </ligand>
</feature>
<feature type="binding site" evidence="1">
    <location>
        <begin position="18"/>
        <end position="23"/>
    </location>
    <ligand>
        <name>substrate</name>
    </ligand>
</feature>
<feature type="site" description="Interaction with substrate tRNA" evidence="1">
    <location>
        <position position="107"/>
    </location>
</feature>
<feature type="site" description="Interaction with substrate tRNA" evidence="1">
    <location>
        <position position="129"/>
    </location>
</feature>
<name>MIAA_PELPB</name>
<gene>
    <name evidence="1" type="primary">miaA</name>
    <name type="ordered locus">Ppha_1201</name>
</gene>